<name>GMHA_MARSD</name>
<organism>
    <name type="scientific">Maridesulfovibrio salexigens (strain ATCC 14822 / DSM 2638 / NCIMB 8403 / VKM B-1763)</name>
    <name type="common">Desulfovibrio salexigens</name>
    <dbReference type="NCBI Taxonomy" id="526222"/>
    <lineage>
        <taxon>Bacteria</taxon>
        <taxon>Pseudomonadati</taxon>
        <taxon>Thermodesulfobacteriota</taxon>
        <taxon>Desulfovibrionia</taxon>
        <taxon>Desulfovibrionales</taxon>
        <taxon>Desulfovibrionaceae</taxon>
        <taxon>Maridesulfovibrio</taxon>
    </lineage>
</organism>
<dbReference type="EC" id="5.3.1.28" evidence="1"/>
<dbReference type="EMBL" id="CP001649">
    <property type="protein sequence ID" value="ACS79152.1"/>
    <property type="molecule type" value="Genomic_DNA"/>
</dbReference>
<dbReference type="RefSeq" id="WP_015850971.1">
    <property type="nucleotide sequence ID" value="NC_012881.1"/>
</dbReference>
<dbReference type="SMR" id="C6C0L8"/>
<dbReference type="STRING" id="526222.Desal_1088"/>
<dbReference type="KEGG" id="dsa:Desal_1088"/>
<dbReference type="eggNOG" id="COG0279">
    <property type="taxonomic scope" value="Bacteria"/>
</dbReference>
<dbReference type="HOGENOM" id="CLU_080999_3_0_7"/>
<dbReference type="OrthoDB" id="9810929at2"/>
<dbReference type="UniPathway" id="UPA00041">
    <property type="reaction ID" value="UER00436"/>
</dbReference>
<dbReference type="Proteomes" id="UP000002601">
    <property type="component" value="Chromosome"/>
</dbReference>
<dbReference type="GO" id="GO:0005737">
    <property type="term" value="C:cytoplasm"/>
    <property type="evidence" value="ECO:0007669"/>
    <property type="project" value="UniProtKB-SubCell"/>
</dbReference>
<dbReference type="GO" id="GO:0097367">
    <property type="term" value="F:carbohydrate derivative binding"/>
    <property type="evidence" value="ECO:0007669"/>
    <property type="project" value="InterPro"/>
</dbReference>
<dbReference type="GO" id="GO:0008968">
    <property type="term" value="F:D-sedoheptulose 7-phosphate isomerase activity"/>
    <property type="evidence" value="ECO:0007669"/>
    <property type="project" value="UniProtKB-UniRule"/>
</dbReference>
<dbReference type="GO" id="GO:0008270">
    <property type="term" value="F:zinc ion binding"/>
    <property type="evidence" value="ECO:0007669"/>
    <property type="project" value="UniProtKB-UniRule"/>
</dbReference>
<dbReference type="GO" id="GO:0005975">
    <property type="term" value="P:carbohydrate metabolic process"/>
    <property type="evidence" value="ECO:0007669"/>
    <property type="project" value="UniProtKB-UniRule"/>
</dbReference>
<dbReference type="GO" id="GO:2001061">
    <property type="term" value="P:D-glycero-D-manno-heptose 7-phosphate biosynthetic process"/>
    <property type="evidence" value="ECO:0007669"/>
    <property type="project" value="UniProtKB-UniPathway"/>
</dbReference>
<dbReference type="CDD" id="cd05006">
    <property type="entry name" value="SIS_GmhA"/>
    <property type="match status" value="1"/>
</dbReference>
<dbReference type="Gene3D" id="3.40.50.10490">
    <property type="entry name" value="Glucose-6-phosphate isomerase like protein, domain 1"/>
    <property type="match status" value="1"/>
</dbReference>
<dbReference type="HAMAP" id="MF_00067">
    <property type="entry name" value="GmhA"/>
    <property type="match status" value="1"/>
</dbReference>
<dbReference type="InterPro" id="IPR035461">
    <property type="entry name" value="GmhA/DiaA"/>
</dbReference>
<dbReference type="InterPro" id="IPR004515">
    <property type="entry name" value="Phosphoheptose_Isoase"/>
</dbReference>
<dbReference type="InterPro" id="IPR001347">
    <property type="entry name" value="SIS_dom"/>
</dbReference>
<dbReference type="InterPro" id="IPR046348">
    <property type="entry name" value="SIS_dom_sf"/>
</dbReference>
<dbReference type="InterPro" id="IPR050099">
    <property type="entry name" value="SIS_GmhA/DiaA_subfam"/>
</dbReference>
<dbReference type="PANTHER" id="PTHR30390:SF6">
    <property type="entry name" value="DNAA INITIATOR-ASSOCIATING PROTEIN DIAA"/>
    <property type="match status" value="1"/>
</dbReference>
<dbReference type="PANTHER" id="PTHR30390">
    <property type="entry name" value="SEDOHEPTULOSE 7-PHOSPHATE ISOMERASE / DNAA INITIATOR-ASSOCIATING FACTOR FOR REPLICATION INITIATION"/>
    <property type="match status" value="1"/>
</dbReference>
<dbReference type="Pfam" id="PF13580">
    <property type="entry name" value="SIS_2"/>
    <property type="match status" value="1"/>
</dbReference>
<dbReference type="SUPFAM" id="SSF53697">
    <property type="entry name" value="SIS domain"/>
    <property type="match status" value="1"/>
</dbReference>
<dbReference type="PROSITE" id="PS51464">
    <property type="entry name" value="SIS"/>
    <property type="match status" value="1"/>
</dbReference>
<feature type="chain" id="PRO_1000202416" description="Phosphoheptose isomerase">
    <location>
        <begin position="1"/>
        <end position="205"/>
    </location>
</feature>
<feature type="domain" description="SIS" evidence="1">
    <location>
        <begin position="38"/>
        <end position="200"/>
    </location>
</feature>
<feature type="binding site" evidence="1">
    <location>
        <begin position="53"/>
        <end position="55"/>
    </location>
    <ligand>
        <name>substrate</name>
    </ligand>
</feature>
<feature type="binding site" evidence="1">
    <location>
        <position position="62"/>
    </location>
    <ligand>
        <name>Zn(2+)</name>
        <dbReference type="ChEBI" id="CHEBI:29105"/>
    </ligand>
</feature>
<feature type="binding site" evidence="1">
    <location>
        <position position="66"/>
    </location>
    <ligand>
        <name>substrate</name>
    </ligand>
</feature>
<feature type="binding site" evidence="1">
    <location>
        <position position="66"/>
    </location>
    <ligand>
        <name>Zn(2+)</name>
        <dbReference type="ChEBI" id="CHEBI:29105"/>
    </ligand>
</feature>
<feature type="binding site" evidence="1">
    <location>
        <begin position="95"/>
        <end position="96"/>
    </location>
    <ligand>
        <name>substrate</name>
    </ligand>
</feature>
<feature type="binding site" evidence="1">
    <location>
        <begin position="121"/>
        <end position="123"/>
    </location>
    <ligand>
        <name>substrate</name>
    </ligand>
</feature>
<feature type="binding site" evidence="1">
    <location>
        <position position="126"/>
    </location>
    <ligand>
        <name>substrate</name>
    </ligand>
</feature>
<feature type="binding site" evidence="1">
    <location>
        <position position="173"/>
    </location>
    <ligand>
        <name>substrate</name>
    </ligand>
</feature>
<feature type="binding site" evidence="1">
    <location>
        <position position="173"/>
    </location>
    <ligand>
        <name>Zn(2+)</name>
        <dbReference type="ChEBI" id="CHEBI:29105"/>
    </ligand>
</feature>
<feature type="binding site" evidence="1">
    <location>
        <position position="181"/>
    </location>
    <ligand>
        <name>Zn(2+)</name>
        <dbReference type="ChEBI" id="CHEBI:29105"/>
    </ligand>
</feature>
<proteinExistence type="inferred from homology"/>
<comment type="function">
    <text evidence="1">Catalyzes the isomerization of sedoheptulose 7-phosphate in D-glycero-D-manno-heptose 7-phosphate.</text>
</comment>
<comment type="catalytic activity">
    <reaction evidence="1">
        <text>2 D-sedoheptulose 7-phosphate = D-glycero-alpha-D-manno-heptose 7-phosphate + D-glycero-beta-D-manno-heptose 7-phosphate</text>
        <dbReference type="Rhea" id="RHEA:27489"/>
        <dbReference type="ChEBI" id="CHEBI:57483"/>
        <dbReference type="ChEBI" id="CHEBI:60203"/>
        <dbReference type="ChEBI" id="CHEBI:60204"/>
        <dbReference type="EC" id="5.3.1.28"/>
    </reaction>
</comment>
<comment type="cofactor">
    <cofactor evidence="1">
        <name>Zn(2+)</name>
        <dbReference type="ChEBI" id="CHEBI:29105"/>
    </cofactor>
    <text evidence="1">Binds 1 zinc ion per subunit.</text>
</comment>
<comment type="pathway">
    <text evidence="1">Carbohydrate biosynthesis; D-glycero-D-manno-heptose 7-phosphate biosynthesis; D-glycero-alpha-D-manno-heptose 7-phosphate and D-glycero-beta-D-manno-heptose 7-phosphate from sedoheptulose 7-phosphate: step 1/1.</text>
</comment>
<comment type="subunit">
    <text evidence="1">Homotetramer.</text>
</comment>
<comment type="subcellular location">
    <subcellularLocation>
        <location evidence="1">Cytoplasm</location>
    </subcellularLocation>
</comment>
<comment type="miscellaneous">
    <text evidence="1">The reaction produces a racemic mixture of D-glycero-alpha-D-manno-heptose 7-phosphate and D-glycero-beta-D-manno-heptose 7-phosphate.</text>
</comment>
<comment type="similarity">
    <text evidence="1">Belongs to the SIS family. GmhA subfamily.</text>
</comment>
<accession>C6C0L8</accession>
<sequence length="205" mass="21936">MSQTALQKVVEHARAGLEVRESFFEQYSQLVVDVSKALAVRLALGSKILFCGNGGSAADCQHLAAELVNRFKLERPPLPGIALTTDSSILTAIGNDYSYEMVFEKQVQALGQPGDVLVGISTSGTSPNVISALKEAKRKGMVTIGMTGISAGEMLPICDHIISVPSKDTAVIQEVHIAVGHLFCHLIDHFLFEAVGELEPYLSGE</sequence>
<evidence type="ECO:0000255" key="1">
    <source>
        <dbReference type="HAMAP-Rule" id="MF_00067"/>
    </source>
</evidence>
<protein>
    <recommendedName>
        <fullName evidence="1">Phosphoheptose isomerase</fullName>
        <ecNumber evidence="1">5.3.1.28</ecNumber>
    </recommendedName>
    <alternativeName>
        <fullName evidence="1">Sedoheptulose 7-phosphate isomerase</fullName>
    </alternativeName>
</protein>
<keyword id="KW-0119">Carbohydrate metabolism</keyword>
<keyword id="KW-0963">Cytoplasm</keyword>
<keyword id="KW-0413">Isomerase</keyword>
<keyword id="KW-0479">Metal-binding</keyword>
<keyword id="KW-1185">Reference proteome</keyword>
<keyword id="KW-0862">Zinc</keyword>
<reference key="1">
    <citation type="submission" date="2009-06" db="EMBL/GenBank/DDBJ databases">
        <title>Complete sequence of Desulfovibrio salexigens DSM 2638.</title>
        <authorList>
            <consortium name="US DOE Joint Genome Institute"/>
            <person name="Lucas S."/>
            <person name="Copeland A."/>
            <person name="Lapidus A."/>
            <person name="Glavina del Rio T."/>
            <person name="Tice H."/>
            <person name="Bruce D."/>
            <person name="Goodwin L."/>
            <person name="Pitluck S."/>
            <person name="Munk A.C."/>
            <person name="Brettin T."/>
            <person name="Detter J.C."/>
            <person name="Han C."/>
            <person name="Tapia R."/>
            <person name="Larimer F."/>
            <person name="Land M."/>
            <person name="Hauser L."/>
            <person name="Kyrpides N."/>
            <person name="Anderson I."/>
            <person name="Wall J.D."/>
            <person name="Arkin A.P."/>
            <person name="Dehal P."/>
            <person name="Chivian D."/>
            <person name="Giles B."/>
            <person name="Hazen T.C."/>
        </authorList>
    </citation>
    <scope>NUCLEOTIDE SEQUENCE [LARGE SCALE GENOMIC DNA]</scope>
    <source>
        <strain>ATCC 14822 / DSM 2638 / NCIMB 8403 / VKM B-1763</strain>
    </source>
</reference>
<gene>
    <name evidence="1" type="primary">gmhA</name>
    <name type="ordered locus">Desal_1088</name>
</gene>